<keyword id="KW-0413">Isomerase</keyword>
<keyword id="KW-0423">Lactose metabolism</keyword>
<sequence length="142" mass="15594">MTIIIGSDVDGKRLKELIKDYLEDNDYDVLDVTEGKDLDFVDSTVSVAKEVQKSDDNLGIAIDAYGAGSFIVATKIKGMIAAEVSDERSAYMTRSHNNARMITMGAEIVGDTLAKNVAKEFVNGHYDGGRHQIRVDMLNKMC</sequence>
<accession>Q8CRJ2</accession>
<name>LACA_STAES</name>
<gene>
    <name evidence="1" type="primary">lacA</name>
    <name type="ordered locus">SE_1787</name>
</gene>
<evidence type="ECO:0000255" key="1">
    <source>
        <dbReference type="HAMAP-Rule" id="MF_01555"/>
    </source>
</evidence>
<organism>
    <name type="scientific">Staphylococcus epidermidis (strain ATCC 12228 / FDA PCI 1200)</name>
    <dbReference type="NCBI Taxonomy" id="176280"/>
    <lineage>
        <taxon>Bacteria</taxon>
        <taxon>Bacillati</taxon>
        <taxon>Bacillota</taxon>
        <taxon>Bacilli</taxon>
        <taxon>Bacillales</taxon>
        <taxon>Staphylococcaceae</taxon>
        <taxon>Staphylococcus</taxon>
    </lineage>
</organism>
<proteinExistence type="inferred from homology"/>
<dbReference type="EC" id="5.3.1.26" evidence="1"/>
<dbReference type="EMBL" id="AE015929">
    <property type="protein sequence ID" value="AAO05428.1"/>
    <property type="molecule type" value="Genomic_DNA"/>
</dbReference>
<dbReference type="RefSeq" id="NP_765342.1">
    <property type="nucleotide sequence ID" value="NC_004461.1"/>
</dbReference>
<dbReference type="RefSeq" id="WP_001829760.1">
    <property type="nucleotide sequence ID" value="NZ_WBME01000007.1"/>
</dbReference>
<dbReference type="SMR" id="Q8CRJ2"/>
<dbReference type="GeneID" id="50018109"/>
<dbReference type="KEGG" id="sep:SE_1787"/>
<dbReference type="PATRIC" id="fig|176280.10.peg.1744"/>
<dbReference type="eggNOG" id="COG0698">
    <property type="taxonomic scope" value="Bacteria"/>
</dbReference>
<dbReference type="HOGENOM" id="CLU_091396_4_2_9"/>
<dbReference type="OrthoDB" id="1778624at2"/>
<dbReference type="UniPathway" id="UPA00702">
    <property type="reaction ID" value="UER00714"/>
</dbReference>
<dbReference type="Proteomes" id="UP000001411">
    <property type="component" value="Chromosome"/>
</dbReference>
<dbReference type="GO" id="GO:0050044">
    <property type="term" value="F:galactose-6-phosphate isomerase activity"/>
    <property type="evidence" value="ECO:0007669"/>
    <property type="project" value="UniProtKB-UniRule"/>
</dbReference>
<dbReference type="GO" id="GO:0004751">
    <property type="term" value="F:ribose-5-phosphate isomerase activity"/>
    <property type="evidence" value="ECO:0007669"/>
    <property type="project" value="TreeGrafter"/>
</dbReference>
<dbReference type="GO" id="GO:0019316">
    <property type="term" value="P:D-allose catabolic process"/>
    <property type="evidence" value="ECO:0007669"/>
    <property type="project" value="TreeGrafter"/>
</dbReference>
<dbReference type="GO" id="GO:0019388">
    <property type="term" value="P:galactose catabolic process"/>
    <property type="evidence" value="ECO:0007669"/>
    <property type="project" value="UniProtKB-UniPathway"/>
</dbReference>
<dbReference type="GO" id="GO:0019512">
    <property type="term" value="P:lactose catabolic process via tagatose-6-phosphate"/>
    <property type="evidence" value="ECO:0007669"/>
    <property type="project" value="UniProtKB-UniRule"/>
</dbReference>
<dbReference type="GO" id="GO:0009052">
    <property type="term" value="P:pentose-phosphate shunt, non-oxidative branch"/>
    <property type="evidence" value="ECO:0007669"/>
    <property type="project" value="TreeGrafter"/>
</dbReference>
<dbReference type="Gene3D" id="3.40.1400.10">
    <property type="entry name" value="Sugar-phosphate isomerase, RpiB/LacA/LacB"/>
    <property type="match status" value="1"/>
</dbReference>
<dbReference type="HAMAP" id="MF_01555">
    <property type="entry name" value="LacA"/>
    <property type="match status" value="1"/>
</dbReference>
<dbReference type="InterPro" id="IPR004783">
    <property type="entry name" value="LacA"/>
</dbReference>
<dbReference type="InterPro" id="IPR003500">
    <property type="entry name" value="RpiB_LacA_LacB"/>
</dbReference>
<dbReference type="InterPro" id="IPR036569">
    <property type="entry name" value="RpiB_LacA_LacB_sf"/>
</dbReference>
<dbReference type="NCBIfam" id="TIGR01118">
    <property type="entry name" value="lacA"/>
    <property type="match status" value="1"/>
</dbReference>
<dbReference type="NCBIfam" id="NF006380">
    <property type="entry name" value="PRK08621.1"/>
    <property type="match status" value="1"/>
</dbReference>
<dbReference type="NCBIfam" id="TIGR00689">
    <property type="entry name" value="rpiB_lacA_lacB"/>
    <property type="match status" value="1"/>
</dbReference>
<dbReference type="PANTHER" id="PTHR30345:SF5">
    <property type="entry name" value="GALACTOSE-6-PHOSPHATE ISOMERASE SUBUNIT LACA"/>
    <property type="match status" value="1"/>
</dbReference>
<dbReference type="PANTHER" id="PTHR30345">
    <property type="entry name" value="RIBOSE-5-PHOSPHATE ISOMERASE B"/>
    <property type="match status" value="1"/>
</dbReference>
<dbReference type="Pfam" id="PF02502">
    <property type="entry name" value="LacAB_rpiB"/>
    <property type="match status" value="1"/>
</dbReference>
<dbReference type="PIRSF" id="PIRSF005384">
    <property type="entry name" value="RpiB_LacA_B"/>
    <property type="match status" value="1"/>
</dbReference>
<dbReference type="SUPFAM" id="SSF89623">
    <property type="entry name" value="Ribose/Galactose isomerase RpiB/AlsB"/>
    <property type="match status" value="1"/>
</dbReference>
<comment type="catalytic activity">
    <reaction evidence="1">
        <text>aldehydo-D-galactose 6-phosphate = keto-D-tagatose 6-phosphate</text>
        <dbReference type="Rhea" id="RHEA:13033"/>
        <dbReference type="ChEBI" id="CHEBI:58255"/>
        <dbReference type="ChEBI" id="CHEBI:134283"/>
        <dbReference type="EC" id="5.3.1.26"/>
    </reaction>
</comment>
<comment type="pathway">
    <text evidence="1">Carbohydrate metabolism; D-galactose 6-phosphate degradation; D-tagatose 6-phosphate from D-galactose 6-phosphate: step 1/1.</text>
</comment>
<comment type="subunit">
    <text evidence="1">Heteromultimeric protein consisting of LacA and LacB.</text>
</comment>
<comment type="similarity">
    <text evidence="1">Belongs to the LacAB/RpiB family.</text>
</comment>
<reference key="1">
    <citation type="journal article" date="2003" name="Mol. Microbiol.">
        <title>Genome-based analysis of virulence genes in a non-biofilm-forming Staphylococcus epidermidis strain (ATCC 12228).</title>
        <authorList>
            <person name="Zhang Y.-Q."/>
            <person name="Ren S.-X."/>
            <person name="Li H.-L."/>
            <person name="Wang Y.-X."/>
            <person name="Fu G."/>
            <person name="Yang J."/>
            <person name="Qin Z.-Q."/>
            <person name="Miao Y.-G."/>
            <person name="Wang W.-Y."/>
            <person name="Chen R.-S."/>
            <person name="Shen Y."/>
            <person name="Chen Z."/>
            <person name="Yuan Z.-H."/>
            <person name="Zhao G.-P."/>
            <person name="Qu D."/>
            <person name="Danchin A."/>
            <person name="Wen Y.-M."/>
        </authorList>
    </citation>
    <scope>NUCLEOTIDE SEQUENCE [LARGE SCALE GENOMIC DNA]</scope>
    <source>
        <strain>ATCC 12228 / FDA PCI 1200</strain>
    </source>
</reference>
<protein>
    <recommendedName>
        <fullName evidence="1">Galactose-6-phosphate isomerase subunit LacA</fullName>
        <ecNumber evidence="1">5.3.1.26</ecNumber>
    </recommendedName>
</protein>
<feature type="chain" id="PRO_0000208112" description="Galactose-6-phosphate isomerase subunit LacA">
    <location>
        <begin position="1"/>
        <end position="142"/>
    </location>
</feature>